<evidence type="ECO:0000255" key="1">
    <source>
        <dbReference type="HAMAP-Rule" id="MF_01635"/>
    </source>
</evidence>
<feature type="chain" id="PRO_1000186657" description="4-hydroxybenzoate octaprenyltransferase">
    <location>
        <begin position="1"/>
        <end position="287"/>
    </location>
</feature>
<feature type="transmembrane region" description="Helical" evidence="1">
    <location>
        <begin position="41"/>
        <end position="61"/>
    </location>
</feature>
<feature type="transmembrane region" description="Helical" evidence="1">
    <location>
        <begin position="89"/>
        <end position="109"/>
    </location>
</feature>
<feature type="transmembrane region" description="Helical" evidence="1">
    <location>
        <begin position="133"/>
        <end position="153"/>
    </location>
</feature>
<feature type="transmembrane region" description="Helical" evidence="1">
    <location>
        <begin position="158"/>
        <end position="178"/>
    </location>
</feature>
<feature type="transmembrane region" description="Helical" evidence="1">
    <location>
        <begin position="218"/>
        <end position="238"/>
    </location>
</feature>
<feature type="transmembrane region" description="Helical" evidence="1">
    <location>
        <begin position="267"/>
        <end position="287"/>
    </location>
</feature>
<comment type="function">
    <text evidence="1">Catalyzes the prenylation of para-hydroxybenzoate (PHB) with an all-trans polyprenyl group. Mediates the second step in the final reaction sequence of ubiquinone-8 (UQ-8) biosynthesis, which is the condensation of the polyisoprenoid side chain with PHB, generating the first membrane-bound Q intermediate 3-octaprenyl-4-hydroxybenzoate.</text>
</comment>
<comment type="catalytic activity">
    <reaction evidence="1">
        <text>all-trans-octaprenyl diphosphate + 4-hydroxybenzoate = 4-hydroxy-3-(all-trans-octaprenyl)benzoate + diphosphate</text>
        <dbReference type="Rhea" id="RHEA:27782"/>
        <dbReference type="ChEBI" id="CHEBI:1617"/>
        <dbReference type="ChEBI" id="CHEBI:17879"/>
        <dbReference type="ChEBI" id="CHEBI:33019"/>
        <dbReference type="ChEBI" id="CHEBI:57711"/>
        <dbReference type="EC" id="2.5.1.39"/>
    </reaction>
</comment>
<comment type="cofactor">
    <cofactor evidence="1">
        <name>Mg(2+)</name>
        <dbReference type="ChEBI" id="CHEBI:18420"/>
    </cofactor>
</comment>
<comment type="pathway">
    <text evidence="1">Cofactor biosynthesis; ubiquinone biosynthesis.</text>
</comment>
<comment type="subcellular location">
    <subcellularLocation>
        <location evidence="1">Cell inner membrane</location>
        <topology evidence="1">Multi-pass membrane protein</topology>
    </subcellularLocation>
</comment>
<comment type="similarity">
    <text evidence="1">Belongs to the UbiA prenyltransferase family.</text>
</comment>
<sequence length="287" mass="31675">MLARFPLYLRLVRMDKPIGSLLLLWPTLNALWIASDGHPRWPLIVIFALGTLLMRSAGCAMNDYADRDFDRHVKRTADRPLTSGKIRAWEAVAIAVGLSFVAFLLILPLNTLTKELSVVALFVAGTYPFMKRFFAIPQAYLGIAFGFGIPMAFAAVQNTVPPLAWVMLIANVFWSIAYDTEYAMVDRDDDIKIGIRTSALTFGRFDVAAVMACYAVTLGIYVWIGIALGFGAAYWVGWAAAAGCAVYHYTLIKGRERMPCFAAFRHNNWLGGVLFAGIAAHYLMAGS</sequence>
<keyword id="KW-0997">Cell inner membrane</keyword>
<keyword id="KW-1003">Cell membrane</keyword>
<keyword id="KW-0460">Magnesium</keyword>
<keyword id="KW-0472">Membrane</keyword>
<keyword id="KW-1185">Reference proteome</keyword>
<keyword id="KW-0808">Transferase</keyword>
<keyword id="KW-0812">Transmembrane</keyword>
<keyword id="KW-1133">Transmembrane helix</keyword>
<keyword id="KW-0831">Ubiquinone biosynthesis</keyword>
<name>UBIA_BURM1</name>
<accession>A9AGE2</accession>
<reference key="1">
    <citation type="submission" date="2007-10" db="EMBL/GenBank/DDBJ databases">
        <title>Complete sequence of chromosome 1 of Burkholderia multivorans ATCC 17616.</title>
        <authorList>
            <person name="Copeland A."/>
            <person name="Lucas S."/>
            <person name="Lapidus A."/>
            <person name="Barry K."/>
            <person name="Glavina del Rio T."/>
            <person name="Dalin E."/>
            <person name="Tice H."/>
            <person name="Pitluck S."/>
            <person name="Chain P."/>
            <person name="Malfatti S."/>
            <person name="Shin M."/>
            <person name="Vergez L."/>
            <person name="Schmutz J."/>
            <person name="Larimer F."/>
            <person name="Land M."/>
            <person name="Hauser L."/>
            <person name="Kyrpides N."/>
            <person name="Kim E."/>
            <person name="Tiedje J."/>
            <person name="Richardson P."/>
        </authorList>
    </citation>
    <scope>NUCLEOTIDE SEQUENCE [LARGE SCALE GENOMIC DNA]</scope>
    <source>
        <strain>ATCC 17616 / 249</strain>
    </source>
</reference>
<reference key="2">
    <citation type="submission" date="2007-04" db="EMBL/GenBank/DDBJ databases">
        <title>Complete genome sequence of Burkholderia multivorans ATCC 17616.</title>
        <authorList>
            <person name="Ohtsubo Y."/>
            <person name="Yamashita A."/>
            <person name="Kurokawa K."/>
            <person name="Takami H."/>
            <person name="Yuhara S."/>
            <person name="Nishiyama E."/>
            <person name="Endo R."/>
            <person name="Miyazaki R."/>
            <person name="Ono A."/>
            <person name="Yano K."/>
            <person name="Ito M."/>
            <person name="Sota M."/>
            <person name="Yuji N."/>
            <person name="Hattori M."/>
            <person name="Tsuda M."/>
        </authorList>
    </citation>
    <scope>NUCLEOTIDE SEQUENCE [LARGE SCALE GENOMIC DNA]</scope>
    <source>
        <strain>ATCC 17616 / 249</strain>
    </source>
</reference>
<dbReference type="EC" id="2.5.1.39" evidence="1"/>
<dbReference type="EMBL" id="CP000868">
    <property type="protein sequence ID" value="ABX16341.1"/>
    <property type="molecule type" value="Genomic_DNA"/>
</dbReference>
<dbReference type="EMBL" id="AP009385">
    <property type="protein sequence ID" value="BAG42545.1"/>
    <property type="molecule type" value="Genomic_DNA"/>
</dbReference>
<dbReference type="RefSeq" id="WP_012214090.1">
    <property type="nucleotide sequence ID" value="NC_010084.1"/>
</dbReference>
<dbReference type="SMR" id="A9AGE2"/>
<dbReference type="STRING" id="395019.BMULJ_00581"/>
<dbReference type="GeneID" id="89569010"/>
<dbReference type="KEGG" id="bmj:BMULJ_00581"/>
<dbReference type="KEGG" id="bmu:Bmul_2657"/>
<dbReference type="eggNOG" id="COG0382">
    <property type="taxonomic scope" value="Bacteria"/>
</dbReference>
<dbReference type="HOGENOM" id="CLU_034879_1_0_4"/>
<dbReference type="UniPathway" id="UPA00232"/>
<dbReference type="Proteomes" id="UP000008815">
    <property type="component" value="Chromosome 1"/>
</dbReference>
<dbReference type="GO" id="GO:0005886">
    <property type="term" value="C:plasma membrane"/>
    <property type="evidence" value="ECO:0007669"/>
    <property type="project" value="UniProtKB-SubCell"/>
</dbReference>
<dbReference type="GO" id="GO:0008412">
    <property type="term" value="F:4-hydroxybenzoate polyprenyltransferase activity"/>
    <property type="evidence" value="ECO:0007669"/>
    <property type="project" value="UniProtKB-UniRule"/>
</dbReference>
<dbReference type="GO" id="GO:0006744">
    <property type="term" value="P:ubiquinone biosynthetic process"/>
    <property type="evidence" value="ECO:0007669"/>
    <property type="project" value="UniProtKB-UniRule"/>
</dbReference>
<dbReference type="CDD" id="cd13959">
    <property type="entry name" value="PT_UbiA_COQ2"/>
    <property type="match status" value="1"/>
</dbReference>
<dbReference type="FunFam" id="1.10.357.140:FF:000002">
    <property type="entry name" value="4-hydroxybenzoate octaprenyltransferase"/>
    <property type="match status" value="1"/>
</dbReference>
<dbReference type="FunFam" id="1.20.120.1780:FF:000001">
    <property type="entry name" value="4-hydroxybenzoate octaprenyltransferase"/>
    <property type="match status" value="1"/>
</dbReference>
<dbReference type="Gene3D" id="1.10.357.140">
    <property type="entry name" value="UbiA prenyltransferase"/>
    <property type="match status" value="1"/>
</dbReference>
<dbReference type="Gene3D" id="1.20.120.1780">
    <property type="entry name" value="UbiA prenyltransferase"/>
    <property type="match status" value="1"/>
</dbReference>
<dbReference type="HAMAP" id="MF_01635">
    <property type="entry name" value="UbiA"/>
    <property type="match status" value="1"/>
</dbReference>
<dbReference type="InterPro" id="IPR006370">
    <property type="entry name" value="HB_polyprenyltransferase-like"/>
</dbReference>
<dbReference type="InterPro" id="IPR039653">
    <property type="entry name" value="Prenyltransferase"/>
</dbReference>
<dbReference type="InterPro" id="IPR000537">
    <property type="entry name" value="UbiA_prenyltransferase"/>
</dbReference>
<dbReference type="InterPro" id="IPR030470">
    <property type="entry name" value="UbiA_prenylTrfase_CS"/>
</dbReference>
<dbReference type="InterPro" id="IPR044878">
    <property type="entry name" value="UbiA_sf"/>
</dbReference>
<dbReference type="NCBIfam" id="TIGR01474">
    <property type="entry name" value="ubiA_proteo"/>
    <property type="match status" value="1"/>
</dbReference>
<dbReference type="PANTHER" id="PTHR11048:SF28">
    <property type="entry name" value="4-HYDROXYBENZOATE POLYPRENYLTRANSFERASE, MITOCHONDRIAL"/>
    <property type="match status" value="1"/>
</dbReference>
<dbReference type="PANTHER" id="PTHR11048">
    <property type="entry name" value="PRENYLTRANSFERASES"/>
    <property type="match status" value="1"/>
</dbReference>
<dbReference type="Pfam" id="PF01040">
    <property type="entry name" value="UbiA"/>
    <property type="match status" value="1"/>
</dbReference>
<dbReference type="PROSITE" id="PS00943">
    <property type="entry name" value="UBIA"/>
    <property type="match status" value="1"/>
</dbReference>
<protein>
    <recommendedName>
        <fullName evidence="1">4-hydroxybenzoate octaprenyltransferase</fullName>
        <ecNumber evidence="1">2.5.1.39</ecNumber>
    </recommendedName>
    <alternativeName>
        <fullName evidence="1">4-HB polyprenyltransferase</fullName>
    </alternativeName>
</protein>
<proteinExistence type="inferred from homology"/>
<organism>
    <name type="scientific">Burkholderia multivorans (strain ATCC 17616 / 249)</name>
    <dbReference type="NCBI Taxonomy" id="395019"/>
    <lineage>
        <taxon>Bacteria</taxon>
        <taxon>Pseudomonadati</taxon>
        <taxon>Pseudomonadota</taxon>
        <taxon>Betaproteobacteria</taxon>
        <taxon>Burkholderiales</taxon>
        <taxon>Burkholderiaceae</taxon>
        <taxon>Burkholderia</taxon>
        <taxon>Burkholderia cepacia complex</taxon>
    </lineage>
</organism>
<gene>
    <name evidence="1" type="primary">ubiA</name>
    <name type="ordered locus">Bmul_2657</name>
    <name type="ordered locus">BMULJ_00581</name>
</gene>